<accession>Q7V9Y1</accession>
<organism>
    <name type="scientific">Prochlorococcus marinus (strain SARG / CCMP1375 / SS120)</name>
    <dbReference type="NCBI Taxonomy" id="167539"/>
    <lineage>
        <taxon>Bacteria</taxon>
        <taxon>Bacillati</taxon>
        <taxon>Cyanobacteriota</taxon>
        <taxon>Cyanophyceae</taxon>
        <taxon>Synechococcales</taxon>
        <taxon>Prochlorococcaceae</taxon>
        <taxon>Prochlorococcus</taxon>
    </lineage>
</organism>
<feature type="chain" id="PRO_0000158827" description="Adenylate kinase">
    <location>
        <begin position="1"/>
        <end position="182"/>
    </location>
</feature>
<feature type="region of interest" description="NMP" evidence="1">
    <location>
        <begin position="32"/>
        <end position="61"/>
    </location>
</feature>
<feature type="region of interest" description="LID" evidence="1">
    <location>
        <begin position="126"/>
        <end position="132"/>
    </location>
</feature>
<feature type="binding site" evidence="1">
    <location>
        <begin position="12"/>
        <end position="17"/>
    </location>
    <ligand>
        <name>ATP</name>
        <dbReference type="ChEBI" id="CHEBI:30616"/>
    </ligand>
</feature>
<feature type="binding site" evidence="1">
    <location>
        <position position="33"/>
    </location>
    <ligand>
        <name>AMP</name>
        <dbReference type="ChEBI" id="CHEBI:456215"/>
    </ligand>
</feature>
<feature type="binding site" evidence="1">
    <location>
        <position position="38"/>
    </location>
    <ligand>
        <name>AMP</name>
        <dbReference type="ChEBI" id="CHEBI:456215"/>
    </ligand>
</feature>
<feature type="binding site" evidence="1">
    <location>
        <begin position="59"/>
        <end position="61"/>
    </location>
    <ligand>
        <name>AMP</name>
        <dbReference type="ChEBI" id="CHEBI:456215"/>
    </ligand>
</feature>
<feature type="binding site" evidence="1">
    <location>
        <begin position="85"/>
        <end position="88"/>
    </location>
    <ligand>
        <name>AMP</name>
        <dbReference type="ChEBI" id="CHEBI:456215"/>
    </ligand>
</feature>
<feature type="binding site" evidence="1">
    <location>
        <position position="92"/>
    </location>
    <ligand>
        <name>AMP</name>
        <dbReference type="ChEBI" id="CHEBI:456215"/>
    </ligand>
</feature>
<feature type="binding site" evidence="1">
    <location>
        <position position="127"/>
    </location>
    <ligand>
        <name>ATP</name>
        <dbReference type="ChEBI" id="CHEBI:30616"/>
    </ligand>
</feature>
<feature type="binding site" evidence="1">
    <location>
        <position position="129"/>
    </location>
    <ligand>
        <name>AMP</name>
        <dbReference type="ChEBI" id="CHEBI:456215"/>
    </ligand>
</feature>
<feature type="binding site" evidence="1">
    <location>
        <position position="140"/>
    </location>
    <ligand>
        <name>AMP</name>
        <dbReference type="ChEBI" id="CHEBI:456215"/>
    </ligand>
</feature>
<feature type="binding site" evidence="1">
    <location>
        <position position="168"/>
    </location>
    <ligand>
        <name>ATP</name>
        <dbReference type="ChEBI" id="CHEBI:30616"/>
    </ligand>
</feature>
<sequence length="182" mass="20138">MKNRLLFLGPPGAGKGTQASLICKDQGFLHLSTGDLLREEVSGGTDLGKKAELIMNKGELVSDEIVISIVEKRLIKYSEGWLLDGFPRNLAQASLLQNLLGRISQPIEIVLLIEIDDEILTERMLGRGRKDDNKAVIKNRLKIYKDQTSPLVDHYKKQGILKSINGCGSVEDVNSRIKEALS</sequence>
<name>KAD_PROMA</name>
<protein>
    <recommendedName>
        <fullName evidence="1">Adenylate kinase</fullName>
        <shortName evidence="1">AK</shortName>
        <ecNumber evidence="1">2.7.4.3</ecNumber>
    </recommendedName>
    <alternativeName>
        <fullName evidence="1">ATP-AMP transphosphorylase</fullName>
    </alternativeName>
    <alternativeName>
        <fullName evidence="1">ATP:AMP phosphotransferase</fullName>
    </alternativeName>
    <alternativeName>
        <fullName evidence="1">Adenylate monophosphate kinase</fullName>
    </alternativeName>
</protein>
<comment type="function">
    <text evidence="1">Catalyzes the reversible transfer of the terminal phosphate group between ATP and AMP. Plays an important role in cellular energy homeostasis and in adenine nucleotide metabolism.</text>
</comment>
<comment type="catalytic activity">
    <reaction evidence="1">
        <text>AMP + ATP = 2 ADP</text>
        <dbReference type="Rhea" id="RHEA:12973"/>
        <dbReference type="ChEBI" id="CHEBI:30616"/>
        <dbReference type="ChEBI" id="CHEBI:456215"/>
        <dbReference type="ChEBI" id="CHEBI:456216"/>
        <dbReference type="EC" id="2.7.4.3"/>
    </reaction>
</comment>
<comment type="pathway">
    <text evidence="1">Purine metabolism; AMP biosynthesis via salvage pathway; AMP from ADP: step 1/1.</text>
</comment>
<comment type="subunit">
    <text evidence="1">Monomer.</text>
</comment>
<comment type="subcellular location">
    <subcellularLocation>
        <location evidence="1">Cytoplasm</location>
    </subcellularLocation>
</comment>
<comment type="domain">
    <text evidence="1">Consists of three domains, a large central CORE domain and two small peripheral domains, NMPbind and LID, which undergo movements during catalysis. The LID domain closes over the site of phosphoryl transfer upon ATP binding. Assembling and dissambling the active center during each catalytic cycle provides an effective means to prevent ATP hydrolysis.</text>
</comment>
<comment type="similarity">
    <text evidence="1">Belongs to the adenylate kinase family.</text>
</comment>
<proteinExistence type="inferred from homology"/>
<keyword id="KW-0067">ATP-binding</keyword>
<keyword id="KW-0963">Cytoplasm</keyword>
<keyword id="KW-0418">Kinase</keyword>
<keyword id="KW-0545">Nucleotide biosynthesis</keyword>
<keyword id="KW-0547">Nucleotide-binding</keyword>
<keyword id="KW-1185">Reference proteome</keyword>
<keyword id="KW-0808">Transferase</keyword>
<reference key="1">
    <citation type="journal article" date="2003" name="Proc. Natl. Acad. Sci. U.S.A.">
        <title>Genome sequence of the cyanobacterium Prochlorococcus marinus SS120, a nearly minimal oxyphototrophic genome.</title>
        <authorList>
            <person name="Dufresne A."/>
            <person name="Salanoubat M."/>
            <person name="Partensky F."/>
            <person name="Artiguenave F."/>
            <person name="Axmann I.M."/>
            <person name="Barbe V."/>
            <person name="Duprat S."/>
            <person name="Galperin M.Y."/>
            <person name="Koonin E.V."/>
            <person name="Le Gall F."/>
            <person name="Makarova K.S."/>
            <person name="Ostrowski M."/>
            <person name="Oztas S."/>
            <person name="Robert C."/>
            <person name="Rogozin I.B."/>
            <person name="Scanlan D.J."/>
            <person name="Tandeau de Marsac N."/>
            <person name="Weissenbach J."/>
            <person name="Wincker P."/>
            <person name="Wolf Y.I."/>
            <person name="Hess W.R."/>
        </authorList>
    </citation>
    <scope>NUCLEOTIDE SEQUENCE [LARGE SCALE GENOMIC DNA]</scope>
    <source>
        <strain>SARG / CCMP1375 / SS120</strain>
    </source>
</reference>
<evidence type="ECO:0000255" key="1">
    <source>
        <dbReference type="HAMAP-Rule" id="MF_00235"/>
    </source>
</evidence>
<dbReference type="EC" id="2.7.4.3" evidence="1"/>
<dbReference type="EMBL" id="AE017126">
    <property type="protein sequence ID" value="AAQ00737.1"/>
    <property type="molecule type" value="Genomic_DNA"/>
</dbReference>
<dbReference type="RefSeq" id="NP_876084.1">
    <property type="nucleotide sequence ID" value="NC_005042.1"/>
</dbReference>
<dbReference type="RefSeq" id="WP_011125842.1">
    <property type="nucleotide sequence ID" value="NC_005042.1"/>
</dbReference>
<dbReference type="SMR" id="Q7V9Y1"/>
<dbReference type="STRING" id="167539.Pro_1693"/>
<dbReference type="EnsemblBacteria" id="AAQ00737">
    <property type="protein sequence ID" value="AAQ00737"/>
    <property type="gene ID" value="Pro_1693"/>
</dbReference>
<dbReference type="KEGG" id="pma:Pro_1693"/>
<dbReference type="PATRIC" id="fig|167539.5.peg.1788"/>
<dbReference type="eggNOG" id="COG0563">
    <property type="taxonomic scope" value="Bacteria"/>
</dbReference>
<dbReference type="HOGENOM" id="CLU_032354_4_1_3"/>
<dbReference type="OrthoDB" id="9805030at2"/>
<dbReference type="UniPathway" id="UPA00588">
    <property type="reaction ID" value="UER00649"/>
</dbReference>
<dbReference type="Proteomes" id="UP000001420">
    <property type="component" value="Chromosome"/>
</dbReference>
<dbReference type="GO" id="GO:0005737">
    <property type="term" value="C:cytoplasm"/>
    <property type="evidence" value="ECO:0007669"/>
    <property type="project" value="UniProtKB-SubCell"/>
</dbReference>
<dbReference type="GO" id="GO:0004017">
    <property type="term" value="F:adenylate kinase activity"/>
    <property type="evidence" value="ECO:0007669"/>
    <property type="project" value="UniProtKB-UniRule"/>
</dbReference>
<dbReference type="GO" id="GO:0005524">
    <property type="term" value="F:ATP binding"/>
    <property type="evidence" value="ECO:0007669"/>
    <property type="project" value="UniProtKB-UniRule"/>
</dbReference>
<dbReference type="GO" id="GO:0044209">
    <property type="term" value="P:AMP salvage"/>
    <property type="evidence" value="ECO:0007669"/>
    <property type="project" value="UniProtKB-UniRule"/>
</dbReference>
<dbReference type="CDD" id="cd01428">
    <property type="entry name" value="ADK"/>
    <property type="match status" value="1"/>
</dbReference>
<dbReference type="Gene3D" id="3.40.50.300">
    <property type="entry name" value="P-loop containing nucleotide triphosphate hydrolases"/>
    <property type="match status" value="1"/>
</dbReference>
<dbReference type="HAMAP" id="MF_00235">
    <property type="entry name" value="Adenylate_kinase_Adk"/>
    <property type="match status" value="1"/>
</dbReference>
<dbReference type="InterPro" id="IPR000850">
    <property type="entry name" value="Adenylat/UMP-CMP_kin"/>
</dbReference>
<dbReference type="InterPro" id="IPR033690">
    <property type="entry name" value="Adenylat_kinase_CS"/>
</dbReference>
<dbReference type="InterPro" id="IPR027417">
    <property type="entry name" value="P-loop_NTPase"/>
</dbReference>
<dbReference type="NCBIfam" id="NF001381">
    <property type="entry name" value="PRK00279.1-3"/>
    <property type="match status" value="1"/>
</dbReference>
<dbReference type="NCBIfam" id="NF011100">
    <property type="entry name" value="PRK14527.1"/>
    <property type="match status" value="1"/>
</dbReference>
<dbReference type="NCBIfam" id="NF011104">
    <property type="entry name" value="PRK14531.1"/>
    <property type="match status" value="1"/>
</dbReference>
<dbReference type="NCBIfam" id="NF011105">
    <property type="entry name" value="PRK14532.1"/>
    <property type="match status" value="1"/>
</dbReference>
<dbReference type="PANTHER" id="PTHR23359">
    <property type="entry name" value="NUCLEOTIDE KINASE"/>
    <property type="match status" value="1"/>
</dbReference>
<dbReference type="Pfam" id="PF00406">
    <property type="entry name" value="ADK"/>
    <property type="match status" value="1"/>
</dbReference>
<dbReference type="PRINTS" id="PR00094">
    <property type="entry name" value="ADENYLTKNASE"/>
</dbReference>
<dbReference type="SUPFAM" id="SSF52540">
    <property type="entry name" value="P-loop containing nucleoside triphosphate hydrolases"/>
    <property type="match status" value="1"/>
</dbReference>
<dbReference type="PROSITE" id="PS00113">
    <property type="entry name" value="ADENYLATE_KINASE"/>
    <property type="match status" value="1"/>
</dbReference>
<gene>
    <name evidence="1" type="primary">adk</name>
    <name type="ordered locus">Pro_1693</name>
</gene>